<organism>
    <name type="scientific">Shewanella pealeana (strain ATCC 700345 / ANG-SQ1)</name>
    <dbReference type="NCBI Taxonomy" id="398579"/>
    <lineage>
        <taxon>Bacteria</taxon>
        <taxon>Pseudomonadati</taxon>
        <taxon>Pseudomonadota</taxon>
        <taxon>Gammaproteobacteria</taxon>
        <taxon>Alteromonadales</taxon>
        <taxon>Shewanellaceae</taxon>
        <taxon>Shewanella</taxon>
    </lineage>
</organism>
<gene>
    <name evidence="1" type="primary">gmhA</name>
    <name type="ordered locus">Spea_0250</name>
</gene>
<comment type="function">
    <text evidence="1">Catalyzes the isomerization of sedoheptulose 7-phosphate in D-glycero-D-manno-heptose 7-phosphate.</text>
</comment>
<comment type="catalytic activity">
    <reaction evidence="1">
        <text>2 D-sedoheptulose 7-phosphate = D-glycero-alpha-D-manno-heptose 7-phosphate + D-glycero-beta-D-manno-heptose 7-phosphate</text>
        <dbReference type="Rhea" id="RHEA:27489"/>
        <dbReference type="ChEBI" id="CHEBI:57483"/>
        <dbReference type="ChEBI" id="CHEBI:60203"/>
        <dbReference type="ChEBI" id="CHEBI:60204"/>
        <dbReference type="EC" id="5.3.1.28"/>
    </reaction>
</comment>
<comment type="cofactor">
    <cofactor evidence="1">
        <name>Zn(2+)</name>
        <dbReference type="ChEBI" id="CHEBI:29105"/>
    </cofactor>
    <text evidence="1">Binds 1 zinc ion per subunit.</text>
</comment>
<comment type="pathway">
    <text evidence="1">Carbohydrate biosynthesis; D-glycero-D-manno-heptose 7-phosphate biosynthesis; D-glycero-alpha-D-manno-heptose 7-phosphate and D-glycero-beta-D-manno-heptose 7-phosphate from sedoheptulose 7-phosphate: step 1/1.</text>
</comment>
<comment type="subunit">
    <text evidence="1">Homotetramer.</text>
</comment>
<comment type="subcellular location">
    <subcellularLocation>
        <location evidence="1">Cytoplasm</location>
    </subcellularLocation>
</comment>
<comment type="miscellaneous">
    <text evidence="1">The reaction produces a racemic mixture of D-glycero-alpha-D-manno-heptose 7-phosphate and D-glycero-beta-D-manno-heptose 7-phosphate.</text>
</comment>
<comment type="similarity">
    <text evidence="1">Belongs to the SIS family. GmhA subfamily.</text>
</comment>
<evidence type="ECO:0000255" key="1">
    <source>
        <dbReference type="HAMAP-Rule" id="MF_00067"/>
    </source>
</evidence>
<accession>A8GZ41</accession>
<name>GMHA_SHEPA</name>
<feature type="chain" id="PRO_1000197022" description="Phosphoheptose isomerase">
    <location>
        <begin position="1"/>
        <end position="197"/>
    </location>
</feature>
<feature type="domain" description="SIS" evidence="1">
    <location>
        <begin position="34"/>
        <end position="196"/>
    </location>
</feature>
<feature type="binding site" evidence="1">
    <location>
        <begin position="49"/>
        <end position="51"/>
    </location>
    <ligand>
        <name>substrate</name>
    </ligand>
</feature>
<feature type="binding site" evidence="1">
    <location>
        <position position="58"/>
    </location>
    <ligand>
        <name>Zn(2+)</name>
        <dbReference type="ChEBI" id="CHEBI:29105"/>
    </ligand>
</feature>
<feature type="binding site" evidence="1">
    <location>
        <position position="62"/>
    </location>
    <ligand>
        <name>substrate</name>
    </ligand>
</feature>
<feature type="binding site" evidence="1">
    <location>
        <position position="62"/>
    </location>
    <ligand>
        <name>Zn(2+)</name>
        <dbReference type="ChEBI" id="CHEBI:29105"/>
    </ligand>
</feature>
<feature type="binding site" evidence="1">
    <location>
        <begin position="91"/>
        <end position="92"/>
    </location>
    <ligand>
        <name>substrate</name>
    </ligand>
</feature>
<feature type="binding site" evidence="1">
    <location>
        <begin position="117"/>
        <end position="119"/>
    </location>
    <ligand>
        <name>substrate</name>
    </ligand>
</feature>
<feature type="binding site" evidence="1">
    <location>
        <position position="122"/>
    </location>
    <ligand>
        <name>substrate</name>
    </ligand>
</feature>
<feature type="binding site" evidence="1">
    <location>
        <position position="172"/>
    </location>
    <ligand>
        <name>substrate</name>
    </ligand>
</feature>
<feature type="binding site" evidence="1">
    <location>
        <position position="172"/>
    </location>
    <ligand>
        <name>Zn(2+)</name>
        <dbReference type="ChEBI" id="CHEBI:29105"/>
    </ligand>
</feature>
<feature type="binding site" evidence="1">
    <location>
        <position position="180"/>
    </location>
    <ligand>
        <name>Zn(2+)</name>
        <dbReference type="ChEBI" id="CHEBI:29105"/>
    </ligand>
</feature>
<proteinExistence type="inferred from homology"/>
<dbReference type="EC" id="5.3.1.28" evidence="1"/>
<dbReference type="EMBL" id="CP000851">
    <property type="protein sequence ID" value="ABV85578.1"/>
    <property type="molecule type" value="Genomic_DNA"/>
</dbReference>
<dbReference type="RefSeq" id="WP_012153519.1">
    <property type="nucleotide sequence ID" value="NC_009901.1"/>
</dbReference>
<dbReference type="SMR" id="A8GZ41"/>
<dbReference type="STRING" id="398579.Spea_0250"/>
<dbReference type="KEGG" id="spl:Spea_0250"/>
<dbReference type="eggNOG" id="COG0279">
    <property type="taxonomic scope" value="Bacteria"/>
</dbReference>
<dbReference type="HOGENOM" id="CLU_080999_3_1_6"/>
<dbReference type="OrthoDB" id="9810929at2"/>
<dbReference type="UniPathway" id="UPA00041">
    <property type="reaction ID" value="UER00436"/>
</dbReference>
<dbReference type="Proteomes" id="UP000002608">
    <property type="component" value="Chromosome"/>
</dbReference>
<dbReference type="GO" id="GO:0005737">
    <property type="term" value="C:cytoplasm"/>
    <property type="evidence" value="ECO:0007669"/>
    <property type="project" value="UniProtKB-SubCell"/>
</dbReference>
<dbReference type="GO" id="GO:0097367">
    <property type="term" value="F:carbohydrate derivative binding"/>
    <property type="evidence" value="ECO:0007669"/>
    <property type="project" value="InterPro"/>
</dbReference>
<dbReference type="GO" id="GO:0008968">
    <property type="term" value="F:D-sedoheptulose 7-phosphate isomerase activity"/>
    <property type="evidence" value="ECO:0007669"/>
    <property type="project" value="UniProtKB-UniRule"/>
</dbReference>
<dbReference type="GO" id="GO:0008270">
    <property type="term" value="F:zinc ion binding"/>
    <property type="evidence" value="ECO:0007669"/>
    <property type="project" value="UniProtKB-UniRule"/>
</dbReference>
<dbReference type="GO" id="GO:0005975">
    <property type="term" value="P:carbohydrate metabolic process"/>
    <property type="evidence" value="ECO:0007669"/>
    <property type="project" value="UniProtKB-UniRule"/>
</dbReference>
<dbReference type="GO" id="GO:2001061">
    <property type="term" value="P:D-glycero-D-manno-heptose 7-phosphate biosynthetic process"/>
    <property type="evidence" value="ECO:0007669"/>
    <property type="project" value="UniProtKB-UniPathway"/>
</dbReference>
<dbReference type="CDD" id="cd05006">
    <property type="entry name" value="SIS_GmhA"/>
    <property type="match status" value="1"/>
</dbReference>
<dbReference type="Gene3D" id="3.40.50.10490">
    <property type="entry name" value="Glucose-6-phosphate isomerase like protein, domain 1"/>
    <property type="match status" value="1"/>
</dbReference>
<dbReference type="HAMAP" id="MF_00067">
    <property type="entry name" value="GmhA"/>
    <property type="match status" value="1"/>
</dbReference>
<dbReference type="InterPro" id="IPR035461">
    <property type="entry name" value="GmhA/DiaA"/>
</dbReference>
<dbReference type="InterPro" id="IPR004515">
    <property type="entry name" value="Phosphoheptose_Isoase"/>
</dbReference>
<dbReference type="InterPro" id="IPR001347">
    <property type="entry name" value="SIS_dom"/>
</dbReference>
<dbReference type="InterPro" id="IPR046348">
    <property type="entry name" value="SIS_dom_sf"/>
</dbReference>
<dbReference type="InterPro" id="IPR050099">
    <property type="entry name" value="SIS_GmhA/DiaA_subfam"/>
</dbReference>
<dbReference type="NCBIfam" id="NF010546">
    <property type="entry name" value="PRK13936.1"/>
    <property type="match status" value="1"/>
</dbReference>
<dbReference type="PANTHER" id="PTHR30390:SF6">
    <property type="entry name" value="DNAA INITIATOR-ASSOCIATING PROTEIN DIAA"/>
    <property type="match status" value="1"/>
</dbReference>
<dbReference type="PANTHER" id="PTHR30390">
    <property type="entry name" value="SEDOHEPTULOSE 7-PHOSPHATE ISOMERASE / DNAA INITIATOR-ASSOCIATING FACTOR FOR REPLICATION INITIATION"/>
    <property type="match status" value="1"/>
</dbReference>
<dbReference type="Pfam" id="PF13580">
    <property type="entry name" value="SIS_2"/>
    <property type="match status" value="1"/>
</dbReference>
<dbReference type="SUPFAM" id="SSF53697">
    <property type="entry name" value="SIS domain"/>
    <property type="match status" value="1"/>
</dbReference>
<dbReference type="PROSITE" id="PS51464">
    <property type="entry name" value="SIS"/>
    <property type="match status" value="1"/>
</dbReference>
<reference key="1">
    <citation type="submission" date="2007-10" db="EMBL/GenBank/DDBJ databases">
        <title>Complete sequence of Shewanella pealeana ATCC 700345.</title>
        <authorList>
            <consortium name="US DOE Joint Genome Institute"/>
            <person name="Copeland A."/>
            <person name="Lucas S."/>
            <person name="Lapidus A."/>
            <person name="Barry K."/>
            <person name="Glavina del Rio T."/>
            <person name="Dalin E."/>
            <person name="Tice H."/>
            <person name="Pitluck S."/>
            <person name="Chertkov O."/>
            <person name="Brettin T."/>
            <person name="Bruce D."/>
            <person name="Detter J.C."/>
            <person name="Han C."/>
            <person name="Schmutz J."/>
            <person name="Larimer F."/>
            <person name="Land M."/>
            <person name="Hauser L."/>
            <person name="Kyrpides N."/>
            <person name="Kim E."/>
            <person name="Zhao J.-S.Z."/>
            <person name="Manno D."/>
            <person name="Hawari J."/>
            <person name="Richardson P."/>
        </authorList>
    </citation>
    <scope>NUCLEOTIDE SEQUENCE [LARGE SCALE GENOMIC DNA]</scope>
    <source>
        <strain>ATCC 700345 / ANG-SQ1</strain>
    </source>
</reference>
<sequence length="197" mass="20956">MLERIKDSFTESIQTKIDASEALPESIAKAAEMMVNCLLGGNKILACGNGGSAGDAQHFSAELLNRYEIERPPLPAIALSCDTSTITAIANDYSYDEIFSKQIMALGQPGDILLAISTSGNSGNVIKAMEAALSRDMTIVSLTGKDGGAMAGLLSVNDVEIRVPSNVTARIQEVHLLAIHCLCDNIDRTLFPQDEQA</sequence>
<protein>
    <recommendedName>
        <fullName evidence="1">Phosphoheptose isomerase</fullName>
        <ecNumber evidence="1">5.3.1.28</ecNumber>
    </recommendedName>
    <alternativeName>
        <fullName evidence="1">Sedoheptulose 7-phosphate isomerase</fullName>
    </alternativeName>
</protein>
<keyword id="KW-0119">Carbohydrate metabolism</keyword>
<keyword id="KW-0963">Cytoplasm</keyword>
<keyword id="KW-0413">Isomerase</keyword>
<keyword id="KW-0479">Metal-binding</keyword>
<keyword id="KW-1185">Reference proteome</keyword>
<keyword id="KW-0862">Zinc</keyword>